<name>YICR_SALAR</name>
<accession>A9MKN7</accession>
<dbReference type="EMBL" id="CP000880">
    <property type="protein sequence ID" value="ABX23706.1"/>
    <property type="molecule type" value="Genomic_DNA"/>
</dbReference>
<dbReference type="SMR" id="A9MKN7"/>
<dbReference type="STRING" id="41514.SARI_03912"/>
<dbReference type="KEGG" id="ses:SARI_03912"/>
<dbReference type="HOGENOM" id="CLU_073529_0_1_6"/>
<dbReference type="Proteomes" id="UP000002084">
    <property type="component" value="Chromosome"/>
</dbReference>
<dbReference type="GO" id="GO:0046872">
    <property type="term" value="F:metal ion binding"/>
    <property type="evidence" value="ECO:0007669"/>
    <property type="project" value="UniProtKB-KW"/>
</dbReference>
<dbReference type="GO" id="GO:0008237">
    <property type="term" value="F:metallopeptidase activity"/>
    <property type="evidence" value="ECO:0007669"/>
    <property type="project" value="UniProtKB-KW"/>
</dbReference>
<dbReference type="GO" id="GO:0006508">
    <property type="term" value="P:proteolysis"/>
    <property type="evidence" value="ECO:0007669"/>
    <property type="project" value="UniProtKB-KW"/>
</dbReference>
<dbReference type="CDD" id="cd08071">
    <property type="entry name" value="MPN_DUF2466"/>
    <property type="match status" value="1"/>
</dbReference>
<dbReference type="Gene3D" id="3.40.140.10">
    <property type="entry name" value="Cytidine Deaminase, domain 2"/>
    <property type="match status" value="1"/>
</dbReference>
<dbReference type="HAMAP" id="MF_00018">
    <property type="entry name" value="UPF0758_YicR"/>
    <property type="match status" value="1"/>
</dbReference>
<dbReference type="InterPro" id="IPR037518">
    <property type="entry name" value="MPN"/>
</dbReference>
<dbReference type="InterPro" id="IPR025657">
    <property type="entry name" value="RadC_JAB"/>
</dbReference>
<dbReference type="InterPro" id="IPR010994">
    <property type="entry name" value="RuvA_2-like"/>
</dbReference>
<dbReference type="InterPro" id="IPR001405">
    <property type="entry name" value="UPF0758"/>
</dbReference>
<dbReference type="InterPro" id="IPR020891">
    <property type="entry name" value="UPF0758_CS"/>
</dbReference>
<dbReference type="InterPro" id="IPR046778">
    <property type="entry name" value="UPF0758_N"/>
</dbReference>
<dbReference type="InterPro" id="IPR022820">
    <property type="entry name" value="UPF0758_YicR"/>
</dbReference>
<dbReference type="NCBIfam" id="NF000642">
    <property type="entry name" value="PRK00024.1"/>
    <property type="match status" value="1"/>
</dbReference>
<dbReference type="NCBIfam" id="TIGR00608">
    <property type="entry name" value="radc"/>
    <property type="match status" value="1"/>
</dbReference>
<dbReference type="PANTHER" id="PTHR30471">
    <property type="entry name" value="DNA REPAIR PROTEIN RADC"/>
    <property type="match status" value="1"/>
</dbReference>
<dbReference type="PANTHER" id="PTHR30471:SF3">
    <property type="entry name" value="UPF0758 PROTEIN YEES-RELATED"/>
    <property type="match status" value="1"/>
</dbReference>
<dbReference type="Pfam" id="PF04002">
    <property type="entry name" value="RadC"/>
    <property type="match status" value="1"/>
</dbReference>
<dbReference type="Pfam" id="PF20582">
    <property type="entry name" value="UPF0758_N"/>
    <property type="match status" value="1"/>
</dbReference>
<dbReference type="SUPFAM" id="SSF102712">
    <property type="entry name" value="JAB1/MPN domain"/>
    <property type="match status" value="1"/>
</dbReference>
<dbReference type="SUPFAM" id="SSF47781">
    <property type="entry name" value="RuvA domain 2-like"/>
    <property type="match status" value="1"/>
</dbReference>
<dbReference type="PROSITE" id="PS50249">
    <property type="entry name" value="MPN"/>
    <property type="match status" value="1"/>
</dbReference>
<dbReference type="PROSITE" id="PS01302">
    <property type="entry name" value="UPF0758"/>
    <property type="match status" value="1"/>
</dbReference>
<organism>
    <name type="scientific">Salmonella arizonae (strain ATCC BAA-731 / CDC346-86 / RSK2980)</name>
    <dbReference type="NCBI Taxonomy" id="41514"/>
    <lineage>
        <taxon>Bacteria</taxon>
        <taxon>Pseudomonadati</taxon>
        <taxon>Pseudomonadota</taxon>
        <taxon>Gammaproteobacteria</taxon>
        <taxon>Enterobacterales</taxon>
        <taxon>Enterobacteriaceae</taxon>
        <taxon>Salmonella</taxon>
    </lineage>
</organism>
<keyword id="KW-0378">Hydrolase</keyword>
<keyword id="KW-0479">Metal-binding</keyword>
<keyword id="KW-0482">Metalloprotease</keyword>
<keyword id="KW-0645">Protease</keyword>
<keyword id="KW-1185">Reference proteome</keyword>
<keyword id="KW-0862">Zinc</keyword>
<comment type="similarity">
    <text evidence="1">Belongs to the UPF0758 family. YicR subfamily.</text>
</comment>
<evidence type="ECO:0000255" key="1">
    <source>
        <dbReference type="HAMAP-Rule" id="MF_00018"/>
    </source>
</evidence>
<evidence type="ECO:0000255" key="2">
    <source>
        <dbReference type="PROSITE-ProRule" id="PRU01182"/>
    </source>
</evidence>
<reference key="1">
    <citation type="submission" date="2007-11" db="EMBL/GenBank/DDBJ databases">
        <authorList>
            <consortium name="The Salmonella enterica serovar Arizonae Genome Sequencing Project"/>
            <person name="McClelland M."/>
            <person name="Sanderson E.K."/>
            <person name="Porwollik S."/>
            <person name="Spieth J."/>
            <person name="Clifton W.S."/>
            <person name="Fulton R."/>
            <person name="Chunyan W."/>
            <person name="Wollam A."/>
            <person name="Shah N."/>
            <person name="Pepin K."/>
            <person name="Bhonagiri V."/>
            <person name="Nash W."/>
            <person name="Johnson M."/>
            <person name="Thiruvilangam P."/>
            <person name="Wilson R."/>
        </authorList>
    </citation>
    <scope>NUCLEOTIDE SEQUENCE [LARGE SCALE GENOMIC DNA]</scope>
    <source>
        <strain>ATCC BAA-731 / CDC346-86 / RSK2980</strain>
    </source>
</reference>
<feature type="chain" id="PRO_1000074150" description="UPF0758 protein YicR">
    <location>
        <begin position="1"/>
        <end position="221"/>
    </location>
</feature>
<feature type="domain" description="MPN" evidence="2">
    <location>
        <begin position="99"/>
        <end position="221"/>
    </location>
</feature>
<feature type="short sequence motif" description="JAMM motif" evidence="2">
    <location>
        <begin position="170"/>
        <end position="183"/>
    </location>
</feature>
<feature type="binding site" evidence="2">
    <location>
        <position position="170"/>
    </location>
    <ligand>
        <name>Zn(2+)</name>
        <dbReference type="ChEBI" id="CHEBI:29105"/>
        <note>catalytic</note>
    </ligand>
</feature>
<feature type="binding site" evidence="2">
    <location>
        <position position="172"/>
    </location>
    <ligand>
        <name>Zn(2+)</name>
        <dbReference type="ChEBI" id="CHEBI:29105"/>
        <note>catalytic</note>
    </ligand>
</feature>
<feature type="binding site" evidence="2">
    <location>
        <position position="183"/>
    </location>
    <ligand>
        <name>Zn(2+)</name>
        <dbReference type="ChEBI" id="CHEBI:29105"/>
        <note>catalytic</note>
    </ligand>
</feature>
<sequence length="221" mass="24891">MDTLDELLPREKMLRSGIASLSDVELLALFLRTGTPGKDVITLAKEMLQRFGSLYGLLSADFAQFRGINGIGLAKFAQLKGIAELARRYYSVRMNEEDALLSPEMTLEFLQSQLTGEEREIFLVIFLDAQHRVLQHSRLFSGTLSHVEVHPREIVREAIKLNASAVILAHNHPSGCAEPSKADKHITDRVIKCCQFMDIRVLDHLIIGRGEYVSFAERGWI</sequence>
<proteinExistence type="inferred from homology"/>
<protein>
    <recommendedName>
        <fullName evidence="1">UPF0758 protein YicR</fullName>
    </recommendedName>
</protein>
<gene>
    <name evidence="1" type="primary">yicR</name>
    <name type="ordered locus">SARI_03912</name>
</gene>